<sequence length="542" mass="60461">MATTVTCTRFTDEYQLYEDIGKGAFSVVRRCVKLCTGHEYAAKIINTKKLSARDHQKLEREARICRLLKHSNIVRLHDSISEEGFHYLVFDLVTGGELFEDIVAREYYSEADASHCIQQILEAVLHCHQMGVVHRDLKPENLLLASKCKGAAVKLADFGLAIEVQGDQQAWFGFAGTPGYLSPEVLRKEAYGKPVDIWACGVILYILLVGYPPFWDEDQHKLYQQIKAGAYDFPSPEWDTVTPEAKNLINQMLTINPAKRITAHEALKHPWVCQRSTVASMMHRQETVECLKKFNARRKLKGAILTTMLATRNFSVGRQTTAPATMSTAASGTTMGLVEQAKSLLNKKADGVKPQTNSTKNSSAITSPKGSLPPAALEPQTTVIHNPVDGIKESSDSTNTTIEDEDAKARKQEIIKTTEQLIEAVNNGDFEAYAKICDPGLTSFEPEALGNLVEGMDFHRFYFENLLAKNSKPIHTTILNPHVHVIGEDAACIAYIRLTQYIDGQGRPRTSQSEETRVWHRRDGKWQNVHFHCSGAPVAPLQ</sequence>
<evidence type="ECO:0000250" key="1"/>
<evidence type="ECO:0000250" key="2">
    <source>
        <dbReference type="UniProtKB" id="P08413"/>
    </source>
</evidence>
<evidence type="ECO:0000250" key="3">
    <source>
        <dbReference type="UniProtKB" id="Q13554"/>
    </source>
</evidence>
<evidence type="ECO:0000255" key="4">
    <source>
        <dbReference type="PROSITE-ProRule" id="PRU00159"/>
    </source>
</evidence>
<evidence type="ECO:0000255" key="5">
    <source>
        <dbReference type="PROSITE-ProRule" id="PRU10027"/>
    </source>
</evidence>
<evidence type="ECO:0000256" key="6">
    <source>
        <dbReference type="SAM" id="MobiDB-lite"/>
    </source>
</evidence>
<evidence type="ECO:0000269" key="7">
    <source>
    </source>
</evidence>
<evidence type="ECO:0000269" key="8">
    <source>
    </source>
</evidence>
<evidence type="ECO:0000269" key="9">
    <source>
    </source>
</evidence>
<evidence type="ECO:0000305" key="10"/>
<evidence type="ECO:0007744" key="11">
    <source>
    </source>
</evidence>
<evidence type="ECO:0007744" key="12">
    <source>
    </source>
</evidence>
<evidence type="ECO:0007744" key="13">
    <source>
    </source>
</evidence>
<keyword id="KW-0067">ATP-binding</keyword>
<keyword id="KW-0112">Calmodulin-binding</keyword>
<keyword id="KW-0963">Cytoplasm</keyword>
<keyword id="KW-0206">Cytoskeleton</keyword>
<keyword id="KW-0221">Differentiation</keyword>
<keyword id="KW-0903">Direct protein sequencing</keyword>
<keyword id="KW-0418">Kinase</keyword>
<keyword id="KW-0472">Membrane</keyword>
<keyword id="KW-0524">Neurogenesis</keyword>
<keyword id="KW-0547">Nucleotide-binding</keyword>
<keyword id="KW-0597">Phosphoprotein</keyword>
<keyword id="KW-1185">Reference proteome</keyword>
<keyword id="KW-0703">Sarcoplasmic reticulum</keyword>
<keyword id="KW-0723">Serine/threonine-protein kinase</keyword>
<keyword id="KW-0770">Synapse</keyword>
<keyword id="KW-0808">Transferase</keyword>
<protein>
    <recommendedName>
        <fullName>Calcium/calmodulin-dependent protein kinase type II subunit beta</fullName>
        <shortName>CaM kinase II subunit beta</shortName>
        <shortName>CaMK-II subunit beta</shortName>
        <ecNumber evidence="3">2.7.11.17</ecNumber>
    </recommendedName>
</protein>
<feature type="chain" id="PRO_0000086097" description="Calcium/calmodulin-dependent protein kinase type II subunit beta">
    <location>
        <begin position="1"/>
        <end position="542"/>
    </location>
</feature>
<feature type="domain" description="Protein kinase" evidence="4">
    <location>
        <begin position="14"/>
        <end position="272"/>
    </location>
</feature>
<feature type="region of interest" description="Autoinhibitory domain" evidence="1">
    <location>
        <begin position="283"/>
        <end position="292"/>
    </location>
</feature>
<feature type="region of interest" description="Calmodulin-binding">
    <location>
        <begin position="291"/>
        <end position="301"/>
    </location>
</feature>
<feature type="region of interest" description="Disordered" evidence="6">
    <location>
        <begin position="349"/>
        <end position="376"/>
    </location>
</feature>
<feature type="compositionally biased region" description="Polar residues" evidence="6">
    <location>
        <begin position="354"/>
        <end position="369"/>
    </location>
</feature>
<feature type="active site" description="Proton acceptor" evidence="4 5">
    <location>
        <position position="136"/>
    </location>
</feature>
<feature type="binding site" evidence="4">
    <location>
        <begin position="20"/>
        <end position="28"/>
    </location>
    <ligand>
        <name>ATP</name>
        <dbReference type="ChEBI" id="CHEBI:30616"/>
    </ligand>
</feature>
<feature type="binding site" evidence="4">
    <location>
        <position position="43"/>
    </location>
    <ligand>
        <name>ATP</name>
        <dbReference type="ChEBI" id="CHEBI:30616"/>
    </ligand>
</feature>
<feature type="modified residue" description="Phosphotyrosine" evidence="12">
    <location>
        <position position="17"/>
    </location>
</feature>
<feature type="modified residue" description="Phosphothreonine; by autocatalysis" evidence="11">
    <location>
        <position position="287"/>
    </location>
</feature>
<feature type="modified residue" description="Phosphothreonine; by autocatalysis" evidence="1">
    <location>
        <position position="306"/>
    </location>
</feature>
<feature type="modified residue" description="Phosphothreonine; by autocatalysis" evidence="1">
    <location>
        <position position="307"/>
    </location>
</feature>
<feature type="modified residue" description="Phosphoserine" evidence="2">
    <location>
        <position position="367"/>
    </location>
</feature>
<feature type="modified residue" description="Phosphoserine" evidence="13">
    <location>
        <position position="371"/>
    </location>
</feature>
<feature type="modified residue" description="Phosphoserine" evidence="13">
    <location>
        <position position="394"/>
    </location>
</feature>
<feature type="modified residue" description="Phosphoserine" evidence="2">
    <location>
        <position position="397"/>
    </location>
</feature>
<feature type="modified residue" description="Phosphothreonine" evidence="13">
    <location>
        <position position="400"/>
    </location>
</feature>
<feature type="modified residue" description="Phosphothreonine" evidence="13">
    <location>
        <position position="401"/>
    </location>
</feature>
<feature type="mutagenesis site" description="Blocks calcium/calmodulin binding." evidence="7">
    <original>A</original>
    <variation>R</variation>
    <location>
        <position position="303"/>
    </location>
</feature>
<feature type="sequence conflict" description="In Ref. 1; CAA45160." evidence="10" ref="1">
    <original>D</original>
    <variation>E</variation>
    <location>
        <position position="19"/>
    </location>
</feature>
<comment type="function">
    <text evidence="2 3 7 9">Calcium/calmodulin-dependent protein kinase that functions autonomously after Ca(2+)/calmodulin-binding and autophosphorylation, and is involved in dendritic spine and synapse formation, neuronal plasticity and regulation of sarcoplasmic reticulum Ca(2+) transport in skeletal muscle. In neurons, plays an essential structural role in the reorganization of the actin cytoskeleton during plasticity by binding and bundling actin filaments in a kinase-independent manner. This structural function is required for correct targeting of CaMK2A, which acts downstream of NMDAR to promote dendritic spine and synapse formation and maintain synaptic plasticity which enables long-term potentiation (LTP) and hippocampus-dependent learning. In developing hippocampal neurons, promotes arborization of the dendritic tree and in mature neurons, promotes dendritic remodeling. Also regulates the migration of developing neurons (PubMed:29100089). Participates in the modulation of skeletal muscle function in response to exercise. In slow-twitch muscles, is involved in regulation of sarcoplasmic reticulum (SR) Ca(2+) transport and in fast-twitch muscle participates in the control of Ca(2+) release from the SR through phosphorylation of triadin, a ryanodine receptor-coupling factor, and phospholamban (PLN/PLB), an endogenous inhibitor of SERCA2A/ATP2A2 (PubMed:21752990). In response to interferon-gamma (IFN-gamma) stimulation, catalyzes phosphorylation of STAT1, stimulating the JAK-STAT signaling pathway (By similarity). Phosphorylates reticulophagy regulator RETREG1 at 'Thr-134' under endoplasmic reticulum stress conditions which enhances RETREG1 oligomerization and its membrane scission and reticulophagy activity (By similarity).</text>
</comment>
<comment type="catalytic activity">
    <reaction>
        <text>L-seryl-[protein] + ATP = O-phospho-L-seryl-[protein] + ADP + H(+)</text>
        <dbReference type="Rhea" id="RHEA:17989"/>
        <dbReference type="Rhea" id="RHEA-COMP:9863"/>
        <dbReference type="Rhea" id="RHEA-COMP:11604"/>
        <dbReference type="ChEBI" id="CHEBI:15378"/>
        <dbReference type="ChEBI" id="CHEBI:29999"/>
        <dbReference type="ChEBI" id="CHEBI:30616"/>
        <dbReference type="ChEBI" id="CHEBI:83421"/>
        <dbReference type="ChEBI" id="CHEBI:456216"/>
        <dbReference type="EC" id="2.7.11.17"/>
    </reaction>
</comment>
<comment type="catalytic activity">
    <reaction>
        <text>L-threonyl-[protein] + ATP = O-phospho-L-threonyl-[protein] + ADP + H(+)</text>
        <dbReference type="Rhea" id="RHEA:46608"/>
        <dbReference type="Rhea" id="RHEA-COMP:11060"/>
        <dbReference type="Rhea" id="RHEA-COMP:11605"/>
        <dbReference type="ChEBI" id="CHEBI:15378"/>
        <dbReference type="ChEBI" id="CHEBI:30013"/>
        <dbReference type="ChEBI" id="CHEBI:30616"/>
        <dbReference type="ChEBI" id="CHEBI:61977"/>
        <dbReference type="ChEBI" id="CHEBI:456216"/>
        <dbReference type="EC" id="2.7.11.17"/>
    </reaction>
</comment>
<comment type="activity regulation">
    <text>Activated by Ca(2+)/calmodulin. Binding of calmodulin results in conformational change that relieves intrasteric autoinhibition and allows autophosphorylation of Thr-287 which turns the kinase in a constitutively active form and confers to the kinase a Ca(2+)-independent activity.</text>
</comment>
<comment type="subunit">
    <text evidence="2 3 8">CAMK2 is composed of 4 different chains: alpha (CAMK2A), beta (CAMK2B), gamma (CAMK2G), and delta (CAMK2D). The different isoforms assemble into homo- or heteromultimeric holoenzymes composed of 12 subunits with two hexameric rings stacked one on top of the other. Interacts with SYNGAP1, CAMK2N2 and MPDZ (By similarity). Interacts with FOXO3 (PubMed:23805378). Interacts (when in a kinase inactive state not associated with calmodulin) with ARC; leading to target ARC to inactive synapses (By similarity). Interacts with CAMK2N1; this interaction requires CAMK2B activation by Ca(2+) (By similarity).</text>
</comment>
<comment type="interaction">
    <interactant intactId="EBI-397029">
        <id>P28652</id>
    </interactant>
    <interactant intactId="EBI-397779">
        <id>Q9WV31</id>
        <label>Arc</label>
    </interactant>
    <organismsDiffer>false</organismsDiffer>
    <experiments>2</experiments>
</comment>
<comment type="interaction">
    <interactant intactId="EBI-397029">
        <id>P28652</id>
    </interactant>
    <interactant intactId="EBI-6477441">
        <id>P11716</id>
        <label>RYR1</label>
    </interactant>
    <organismsDiffer>true</organismsDiffer>
    <experiments>4</experiments>
</comment>
<comment type="subcellular location">
    <subcellularLocation>
        <location>Cytoplasm</location>
        <location>Cytoskeleton</location>
    </subcellularLocation>
    <subcellularLocation>
        <location>Cytoplasm</location>
        <location>Cytoskeleton</location>
        <location>Microtubule organizing center</location>
        <location>Centrosome</location>
    </subcellularLocation>
    <subcellularLocation>
        <location evidence="1">Sarcoplasmic reticulum membrane</location>
        <topology evidence="1">Peripheral membrane protein</topology>
        <orientation evidence="1">Cytoplasmic side</orientation>
    </subcellularLocation>
    <subcellularLocation>
        <location evidence="2">Synapse</location>
    </subcellularLocation>
</comment>
<comment type="domain">
    <text>The CAMK2 protein kinases contain a unique C-terminal subunit association domain responsible for oligomerization.</text>
</comment>
<comment type="PTM">
    <text>Autophosphorylation of Thr-287 following activation by Ca(2+)/calmodulin. Phosphorylation of Thr-287 locks the kinase into an activated state.</text>
</comment>
<comment type="disruption phenotype">
    <text evidence="7">Impaired long-term potentiation (LTP) and hippocampus-dependent learning.</text>
</comment>
<comment type="similarity">
    <text evidence="10">Belongs to the protein kinase superfamily. CAMK Ser/Thr protein kinase family. CaMK subfamily.</text>
</comment>
<dbReference type="EC" id="2.7.11.17" evidence="3"/>
<dbReference type="EMBL" id="X63615">
    <property type="protein sequence ID" value="CAA45160.1"/>
    <property type="molecule type" value="mRNA"/>
</dbReference>
<dbReference type="EMBL" id="AK163698">
    <property type="protein sequence ID" value="BAE37464.1"/>
    <property type="molecule type" value="mRNA"/>
</dbReference>
<dbReference type="EMBL" id="AL611926">
    <property type="status" value="NOT_ANNOTATED_CDS"/>
    <property type="molecule type" value="Genomic_DNA"/>
</dbReference>
<dbReference type="EMBL" id="AL645469">
    <property type="status" value="NOT_ANNOTATED_CDS"/>
    <property type="molecule type" value="Genomic_DNA"/>
</dbReference>
<dbReference type="CCDS" id="CCDS24411.1"/>
<dbReference type="PIR" id="A45025">
    <property type="entry name" value="A45025"/>
</dbReference>
<dbReference type="RefSeq" id="NP_031621.3">
    <property type="nucleotide sequence ID" value="NM_007595.5"/>
</dbReference>
<dbReference type="SMR" id="P28652"/>
<dbReference type="BioGRID" id="198462">
    <property type="interactions" value="33"/>
</dbReference>
<dbReference type="CORUM" id="P28652"/>
<dbReference type="DIP" id="DIP-31582N"/>
<dbReference type="FunCoup" id="P28652">
    <property type="interactions" value="2374"/>
</dbReference>
<dbReference type="IntAct" id="P28652">
    <property type="interactions" value="27"/>
</dbReference>
<dbReference type="MINT" id="P28652"/>
<dbReference type="STRING" id="10090.ENSMUSP00000087925"/>
<dbReference type="GlyGen" id="P28652">
    <property type="glycosylation" value="11 sites, 2 N-linked glycans (2 sites), 1 O-linked glycan (7 sites)"/>
</dbReference>
<dbReference type="iPTMnet" id="P28652"/>
<dbReference type="PhosphoSitePlus" id="P28652"/>
<dbReference type="SwissPalm" id="P28652"/>
<dbReference type="jPOST" id="P28652"/>
<dbReference type="PaxDb" id="10090-ENSMUSP00000105438"/>
<dbReference type="PeptideAtlas" id="P28652"/>
<dbReference type="ProteomicsDB" id="263487"/>
<dbReference type="Antibodypedia" id="3482">
    <property type="antibodies" value="547 antibodies from 38 providers"/>
</dbReference>
<dbReference type="DNASU" id="12323"/>
<dbReference type="Ensembl" id="ENSMUST00000109813.9">
    <property type="protein sequence ID" value="ENSMUSP00000105438.3"/>
    <property type="gene ID" value="ENSMUSG00000057897.16"/>
</dbReference>
<dbReference type="GeneID" id="12323"/>
<dbReference type="KEGG" id="mmu:12323"/>
<dbReference type="UCSC" id="uc007hxr.2">
    <property type="organism name" value="mouse"/>
</dbReference>
<dbReference type="AGR" id="MGI:88257"/>
<dbReference type="CTD" id="816"/>
<dbReference type="MGI" id="MGI:88257">
    <property type="gene designation" value="Camk2b"/>
</dbReference>
<dbReference type="VEuPathDB" id="HostDB:ENSMUSG00000057897"/>
<dbReference type="eggNOG" id="KOG0033">
    <property type="taxonomic scope" value="Eukaryota"/>
</dbReference>
<dbReference type="GeneTree" id="ENSGT00940000158973"/>
<dbReference type="InParanoid" id="P28652"/>
<dbReference type="OrthoDB" id="336747at2759"/>
<dbReference type="TreeFam" id="TF315229"/>
<dbReference type="BRENDA" id="2.7.11.17">
    <property type="organism ID" value="3474"/>
</dbReference>
<dbReference type="Reactome" id="R-MMU-3371571">
    <property type="pathway name" value="HSF1-dependent transactivation"/>
</dbReference>
<dbReference type="Reactome" id="R-MMU-399719">
    <property type="pathway name" value="Trafficking of AMPA receptors"/>
</dbReference>
<dbReference type="Reactome" id="R-MMU-438066">
    <property type="pathway name" value="Unblocking of NMDA receptors, glutamate binding and activation"/>
</dbReference>
<dbReference type="Reactome" id="R-MMU-5578775">
    <property type="pathway name" value="Ion homeostasis"/>
</dbReference>
<dbReference type="Reactome" id="R-MMU-5673000">
    <property type="pathway name" value="RAF activation"/>
</dbReference>
<dbReference type="Reactome" id="R-MMU-5673001">
    <property type="pathway name" value="RAF/MAP kinase cascade"/>
</dbReference>
<dbReference type="Reactome" id="R-MMU-877300">
    <property type="pathway name" value="Interferon gamma signaling"/>
</dbReference>
<dbReference type="Reactome" id="R-MMU-936837">
    <property type="pathway name" value="Ion transport by P-type ATPases"/>
</dbReference>
<dbReference type="BioGRID-ORCS" id="12323">
    <property type="hits" value="1 hit in 80 CRISPR screens"/>
</dbReference>
<dbReference type="CD-CODE" id="CE726F99">
    <property type="entry name" value="Postsynaptic density"/>
</dbReference>
<dbReference type="ChiTaRS" id="Camk2b">
    <property type="organism name" value="mouse"/>
</dbReference>
<dbReference type="PRO" id="PR:P28652"/>
<dbReference type="Proteomes" id="UP000000589">
    <property type="component" value="Chromosome 11"/>
</dbReference>
<dbReference type="RNAct" id="P28652">
    <property type="molecule type" value="protein"/>
</dbReference>
<dbReference type="Bgee" id="ENSMUSG00000057897">
    <property type="expression patterns" value="Expressed in dentate gyrus of hippocampal formation granule cell and 198 other cell types or tissues"/>
</dbReference>
<dbReference type="ExpressionAtlas" id="P28652">
    <property type="expression patterns" value="baseline and differential"/>
</dbReference>
<dbReference type="GO" id="GO:0005813">
    <property type="term" value="C:centrosome"/>
    <property type="evidence" value="ECO:0007669"/>
    <property type="project" value="UniProtKB-SubCell"/>
</dbReference>
<dbReference type="GO" id="GO:0005829">
    <property type="term" value="C:cytosol"/>
    <property type="evidence" value="ECO:0000314"/>
    <property type="project" value="MGI"/>
</dbReference>
<dbReference type="GO" id="GO:0014069">
    <property type="term" value="C:postsynaptic density"/>
    <property type="evidence" value="ECO:0000314"/>
    <property type="project" value="MGI"/>
</dbReference>
<dbReference type="GO" id="GO:0033017">
    <property type="term" value="C:sarcoplasmic reticulum membrane"/>
    <property type="evidence" value="ECO:0007669"/>
    <property type="project" value="UniProtKB-SubCell"/>
</dbReference>
<dbReference type="GO" id="GO:0051233">
    <property type="term" value="C:spindle midzone"/>
    <property type="evidence" value="ECO:0000314"/>
    <property type="project" value="MGI"/>
</dbReference>
<dbReference type="GO" id="GO:0005524">
    <property type="term" value="F:ATP binding"/>
    <property type="evidence" value="ECO:0007669"/>
    <property type="project" value="UniProtKB-KW"/>
</dbReference>
<dbReference type="GO" id="GO:0004683">
    <property type="term" value="F:calcium/calmodulin-dependent protein kinase activity"/>
    <property type="evidence" value="ECO:0000314"/>
    <property type="project" value="MGI"/>
</dbReference>
<dbReference type="GO" id="GO:0005516">
    <property type="term" value="F:calmodulin binding"/>
    <property type="evidence" value="ECO:0007669"/>
    <property type="project" value="UniProtKB-KW"/>
</dbReference>
<dbReference type="GO" id="GO:0106310">
    <property type="term" value="F:protein serine kinase activity"/>
    <property type="evidence" value="ECO:0007669"/>
    <property type="project" value="RHEA"/>
</dbReference>
<dbReference type="GO" id="GO:0004674">
    <property type="term" value="F:protein serine/threonine kinase activity"/>
    <property type="evidence" value="ECO:0000314"/>
    <property type="project" value="MGI"/>
</dbReference>
<dbReference type="GO" id="GO:0060466">
    <property type="term" value="P:activation of meiosis involved in egg activation"/>
    <property type="evidence" value="ECO:0000315"/>
    <property type="project" value="MGI"/>
</dbReference>
<dbReference type="GO" id="GO:0097190">
    <property type="term" value="P:apoptotic signaling pathway"/>
    <property type="evidence" value="ECO:0000314"/>
    <property type="project" value="MGI"/>
</dbReference>
<dbReference type="GO" id="GO:0006816">
    <property type="term" value="P:calcium ion transport"/>
    <property type="evidence" value="ECO:0000315"/>
    <property type="project" value="MGI"/>
</dbReference>
<dbReference type="GO" id="GO:0030154">
    <property type="term" value="P:cell differentiation"/>
    <property type="evidence" value="ECO:0007669"/>
    <property type="project" value="UniProtKB-KW"/>
</dbReference>
<dbReference type="GO" id="GO:0000082">
    <property type="term" value="P:G1/S transition of mitotic cell cycle"/>
    <property type="evidence" value="ECO:0000315"/>
    <property type="project" value="MGI"/>
</dbReference>
<dbReference type="GO" id="GO:0060291">
    <property type="term" value="P:long-term synaptic potentiation"/>
    <property type="evidence" value="ECO:0000266"/>
    <property type="project" value="MGI"/>
</dbReference>
<dbReference type="GO" id="GO:0007399">
    <property type="term" value="P:nervous system development"/>
    <property type="evidence" value="ECO:0007669"/>
    <property type="project" value="UniProtKB-KW"/>
</dbReference>
<dbReference type="GO" id="GO:0050885">
    <property type="term" value="P:neuromuscular process controlling balance"/>
    <property type="evidence" value="ECO:0000315"/>
    <property type="project" value="MGI"/>
</dbReference>
<dbReference type="GO" id="GO:2001235">
    <property type="term" value="P:positive regulation of apoptotic signaling pathway"/>
    <property type="evidence" value="ECO:0000314"/>
    <property type="project" value="MGI"/>
</dbReference>
<dbReference type="GO" id="GO:0061003">
    <property type="term" value="P:positive regulation of dendritic spine morphogenesis"/>
    <property type="evidence" value="ECO:0000250"/>
    <property type="project" value="UniProtKB"/>
</dbReference>
<dbReference type="GO" id="GO:0010976">
    <property type="term" value="P:positive regulation of neuron projection development"/>
    <property type="evidence" value="ECO:0000250"/>
    <property type="project" value="UniProtKB"/>
</dbReference>
<dbReference type="GO" id="GO:0090129">
    <property type="term" value="P:positive regulation of synapse maturation"/>
    <property type="evidence" value="ECO:0000250"/>
    <property type="project" value="UniProtKB"/>
</dbReference>
<dbReference type="GO" id="GO:0048169">
    <property type="term" value="P:regulation of long-term neuronal synaptic plasticity"/>
    <property type="evidence" value="ECO:0000315"/>
    <property type="project" value="MGI"/>
</dbReference>
<dbReference type="GO" id="GO:2001222">
    <property type="term" value="P:regulation of neuron migration"/>
    <property type="evidence" value="ECO:0000315"/>
    <property type="project" value="UniProtKB"/>
</dbReference>
<dbReference type="GO" id="GO:0032222">
    <property type="term" value="P:regulation of synaptic transmission, cholinergic"/>
    <property type="evidence" value="ECO:0000315"/>
    <property type="project" value="MGI"/>
</dbReference>
<dbReference type="GO" id="GO:0046686">
    <property type="term" value="P:response to cadmium ion"/>
    <property type="evidence" value="ECO:0000314"/>
    <property type="project" value="MGI"/>
</dbReference>
<dbReference type="CDD" id="cd14086">
    <property type="entry name" value="STKc_CaMKII"/>
    <property type="match status" value="1"/>
</dbReference>
<dbReference type="FunFam" id="1.10.510.10:FF:000001">
    <property type="entry name" value="Calcium/calmodulin-dependent protein kinase type II subunit delta"/>
    <property type="match status" value="1"/>
</dbReference>
<dbReference type="FunFam" id="3.30.200.20:FF:000002">
    <property type="entry name" value="Calcium/calmodulin-dependent protein kinase type II subunit delta isoform 2"/>
    <property type="match status" value="1"/>
</dbReference>
<dbReference type="FunFam" id="3.10.450.50:FF:000001">
    <property type="entry name" value="calcium/calmodulin-dependent protein kinase type II subunit gamma isoform X1"/>
    <property type="match status" value="1"/>
</dbReference>
<dbReference type="Gene3D" id="3.10.450.50">
    <property type="match status" value="1"/>
</dbReference>
<dbReference type="Gene3D" id="6.10.140.620">
    <property type="match status" value="1"/>
</dbReference>
<dbReference type="Gene3D" id="3.30.200.20">
    <property type="entry name" value="Phosphorylase Kinase, domain 1"/>
    <property type="match status" value="1"/>
</dbReference>
<dbReference type="Gene3D" id="1.10.510.10">
    <property type="entry name" value="Transferase(Phosphotransferase) domain 1"/>
    <property type="match status" value="1"/>
</dbReference>
<dbReference type="InterPro" id="IPR013543">
    <property type="entry name" value="Ca/CaM-dep_prot_kinase-assoc"/>
</dbReference>
<dbReference type="InterPro" id="IPR011009">
    <property type="entry name" value="Kinase-like_dom_sf"/>
</dbReference>
<dbReference type="InterPro" id="IPR032710">
    <property type="entry name" value="NTF2-like_dom_sf"/>
</dbReference>
<dbReference type="InterPro" id="IPR000719">
    <property type="entry name" value="Prot_kinase_dom"/>
</dbReference>
<dbReference type="InterPro" id="IPR017441">
    <property type="entry name" value="Protein_kinase_ATP_BS"/>
</dbReference>
<dbReference type="InterPro" id="IPR008271">
    <property type="entry name" value="Ser/Thr_kinase_AS"/>
</dbReference>
<dbReference type="PANTHER" id="PTHR24347">
    <property type="entry name" value="SERINE/THREONINE-PROTEIN KINASE"/>
    <property type="match status" value="1"/>
</dbReference>
<dbReference type="Pfam" id="PF08332">
    <property type="entry name" value="CaMKII_AD"/>
    <property type="match status" value="1"/>
</dbReference>
<dbReference type="Pfam" id="PF00069">
    <property type="entry name" value="Pkinase"/>
    <property type="match status" value="1"/>
</dbReference>
<dbReference type="SMART" id="SM00220">
    <property type="entry name" value="S_TKc"/>
    <property type="match status" value="1"/>
</dbReference>
<dbReference type="SUPFAM" id="SSF54427">
    <property type="entry name" value="NTF2-like"/>
    <property type="match status" value="1"/>
</dbReference>
<dbReference type="SUPFAM" id="SSF56112">
    <property type="entry name" value="Protein kinase-like (PK-like)"/>
    <property type="match status" value="1"/>
</dbReference>
<dbReference type="PROSITE" id="PS00107">
    <property type="entry name" value="PROTEIN_KINASE_ATP"/>
    <property type="match status" value="1"/>
</dbReference>
<dbReference type="PROSITE" id="PS50011">
    <property type="entry name" value="PROTEIN_KINASE_DOM"/>
    <property type="match status" value="1"/>
</dbReference>
<dbReference type="PROSITE" id="PS00108">
    <property type="entry name" value="PROTEIN_KINASE_ST"/>
    <property type="match status" value="1"/>
</dbReference>
<accession>P28652</accession>
<accession>Q5SVH9</accession>
<organism>
    <name type="scientific">Mus musculus</name>
    <name type="common">Mouse</name>
    <dbReference type="NCBI Taxonomy" id="10090"/>
    <lineage>
        <taxon>Eukaryota</taxon>
        <taxon>Metazoa</taxon>
        <taxon>Chordata</taxon>
        <taxon>Craniata</taxon>
        <taxon>Vertebrata</taxon>
        <taxon>Euteleostomi</taxon>
        <taxon>Mammalia</taxon>
        <taxon>Eutheria</taxon>
        <taxon>Euarchontoglires</taxon>
        <taxon>Glires</taxon>
        <taxon>Rodentia</taxon>
        <taxon>Myomorpha</taxon>
        <taxon>Muroidea</taxon>
        <taxon>Muridae</taxon>
        <taxon>Murinae</taxon>
        <taxon>Mus</taxon>
        <taxon>Mus</taxon>
    </lineage>
</organism>
<reference key="1">
    <citation type="journal article" date="1992" name="Mol. Cell. Biol.">
        <title>Structure, expression, and chromosome location of the gene for the beta subunit of brain-specific Ca2+/calmodulin-dependent protein kinase II identified by transgene integration in an embryonic lethal mouse mutant.</title>
        <authorList>
            <person name="Karls U."/>
            <person name="Mueller U."/>
            <person name="Gilbert D.J."/>
            <person name="Copeland N.G."/>
            <person name="Jenkins N.A."/>
            <person name="Harbers K."/>
        </authorList>
    </citation>
    <scope>NUCLEOTIDE SEQUENCE [MRNA]</scope>
    <source>
        <strain>BALB/cJ</strain>
        <tissue>Brain</tissue>
    </source>
</reference>
<reference key="2">
    <citation type="journal article" date="2005" name="Science">
        <title>The transcriptional landscape of the mammalian genome.</title>
        <authorList>
            <person name="Carninci P."/>
            <person name="Kasukawa T."/>
            <person name="Katayama S."/>
            <person name="Gough J."/>
            <person name="Frith M.C."/>
            <person name="Maeda N."/>
            <person name="Oyama R."/>
            <person name="Ravasi T."/>
            <person name="Lenhard B."/>
            <person name="Wells C."/>
            <person name="Kodzius R."/>
            <person name="Shimokawa K."/>
            <person name="Bajic V.B."/>
            <person name="Brenner S.E."/>
            <person name="Batalov S."/>
            <person name="Forrest A.R."/>
            <person name="Zavolan M."/>
            <person name="Davis M.J."/>
            <person name="Wilming L.G."/>
            <person name="Aidinis V."/>
            <person name="Allen J.E."/>
            <person name="Ambesi-Impiombato A."/>
            <person name="Apweiler R."/>
            <person name="Aturaliya R.N."/>
            <person name="Bailey T.L."/>
            <person name="Bansal M."/>
            <person name="Baxter L."/>
            <person name="Beisel K.W."/>
            <person name="Bersano T."/>
            <person name="Bono H."/>
            <person name="Chalk A.M."/>
            <person name="Chiu K.P."/>
            <person name="Choudhary V."/>
            <person name="Christoffels A."/>
            <person name="Clutterbuck D.R."/>
            <person name="Crowe M.L."/>
            <person name="Dalla E."/>
            <person name="Dalrymple B.P."/>
            <person name="de Bono B."/>
            <person name="Della Gatta G."/>
            <person name="di Bernardo D."/>
            <person name="Down T."/>
            <person name="Engstrom P."/>
            <person name="Fagiolini M."/>
            <person name="Faulkner G."/>
            <person name="Fletcher C.F."/>
            <person name="Fukushima T."/>
            <person name="Furuno M."/>
            <person name="Futaki S."/>
            <person name="Gariboldi M."/>
            <person name="Georgii-Hemming P."/>
            <person name="Gingeras T.R."/>
            <person name="Gojobori T."/>
            <person name="Green R.E."/>
            <person name="Gustincich S."/>
            <person name="Harbers M."/>
            <person name="Hayashi Y."/>
            <person name="Hensch T.K."/>
            <person name="Hirokawa N."/>
            <person name="Hill D."/>
            <person name="Huminiecki L."/>
            <person name="Iacono M."/>
            <person name="Ikeo K."/>
            <person name="Iwama A."/>
            <person name="Ishikawa T."/>
            <person name="Jakt M."/>
            <person name="Kanapin A."/>
            <person name="Katoh M."/>
            <person name="Kawasawa Y."/>
            <person name="Kelso J."/>
            <person name="Kitamura H."/>
            <person name="Kitano H."/>
            <person name="Kollias G."/>
            <person name="Krishnan S.P."/>
            <person name="Kruger A."/>
            <person name="Kummerfeld S.K."/>
            <person name="Kurochkin I.V."/>
            <person name="Lareau L.F."/>
            <person name="Lazarevic D."/>
            <person name="Lipovich L."/>
            <person name="Liu J."/>
            <person name="Liuni S."/>
            <person name="McWilliam S."/>
            <person name="Madan Babu M."/>
            <person name="Madera M."/>
            <person name="Marchionni L."/>
            <person name="Matsuda H."/>
            <person name="Matsuzawa S."/>
            <person name="Miki H."/>
            <person name="Mignone F."/>
            <person name="Miyake S."/>
            <person name="Morris K."/>
            <person name="Mottagui-Tabar S."/>
            <person name="Mulder N."/>
            <person name="Nakano N."/>
            <person name="Nakauchi H."/>
            <person name="Ng P."/>
            <person name="Nilsson R."/>
            <person name="Nishiguchi S."/>
            <person name="Nishikawa S."/>
            <person name="Nori F."/>
            <person name="Ohara O."/>
            <person name="Okazaki Y."/>
            <person name="Orlando V."/>
            <person name="Pang K.C."/>
            <person name="Pavan W.J."/>
            <person name="Pavesi G."/>
            <person name="Pesole G."/>
            <person name="Petrovsky N."/>
            <person name="Piazza S."/>
            <person name="Reed J."/>
            <person name="Reid J.F."/>
            <person name="Ring B.Z."/>
            <person name="Ringwald M."/>
            <person name="Rost B."/>
            <person name="Ruan Y."/>
            <person name="Salzberg S.L."/>
            <person name="Sandelin A."/>
            <person name="Schneider C."/>
            <person name="Schoenbach C."/>
            <person name="Sekiguchi K."/>
            <person name="Semple C.A."/>
            <person name="Seno S."/>
            <person name="Sessa L."/>
            <person name="Sheng Y."/>
            <person name="Shibata Y."/>
            <person name="Shimada H."/>
            <person name="Shimada K."/>
            <person name="Silva D."/>
            <person name="Sinclair B."/>
            <person name="Sperling S."/>
            <person name="Stupka E."/>
            <person name="Sugiura K."/>
            <person name="Sultana R."/>
            <person name="Takenaka Y."/>
            <person name="Taki K."/>
            <person name="Tammoja K."/>
            <person name="Tan S.L."/>
            <person name="Tang S."/>
            <person name="Taylor M.S."/>
            <person name="Tegner J."/>
            <person name="Teichmann S.A."/>
            <person name="Ueda H.R."/>
            <person name="van Nimwegen E."/>
            <person name="Verardo R."/>
            <person name="Wei C.L."/>
            <person name="Yagi K."/>
            <person name="Yamanishi H."/>
            <person name="Zabarovsky E."/>
            <person name="Zhu S."/>
            <person name="Zimmer A."/>
            <person name="Hide W."/>
            <person name="Bult C."/>
            <person name="Grimmond S.M."/>
            <person name="Teasdale R.D."/>
            <person name="Liu E.T."/>
            <person name="Brusic V."/>
            <person name="Quackenbush J."/>
            <person name="Wahlestedt C."/>
            <person name="Mattick J.S."/>
            <person name="Hume D.A."/>
            <person name="Kai C."/>
            <person name="Sasaki D."/>
            <person name="Tomaru Y."/>
            <person name="Fukuda S."/>
            <person name="Kanamori-Katayama M."/>
            <person name="Suzuki M."/>
            <person name="Aoki J."/>
            <person name="Arakawa T."/>
            <person name="Iida J."/>
            <person name="Imamura K."/>
            <person name="Itoh M."/>
            <person name="Kato T."/>
            <person name="Kawaji H."/>
            <person name="Kawagashira N."/>
            <person name="Kawashima T."/>
            <person name="Kojima M."/>
            <person name="Kondo S."/>
            <person name="Konno H."/>
            <person name="Nakano K."/>
            <person name="Ninomiya N."/>
            <person name="Nishio T."/>
            <person name="Okada M."/>
            <person name="Plessy C."/>
            <person name="Shibata K."/>
            <person name="Shiraki T."/>
            <person name="Suzuki S."/>
            <person name="Tagami M."/>
            <person name="Waki K."/>
            <person name="Watahiki A."/>
            <person name="Okamura-Oho Y."/>
            <person name="Suzuki H."/>
            <person name="Kawai J."/>
            <person name="Hayashizaki Y."/>
        </authorList>
    </citation>
    <scope>NUCLEOTIDE SEQUENCE [LARGE SCALE MRNA]</scope>
    <source>
        <strain>C57BL/6J</strain>
        <tissue>Cerebellum</tissue>
    </source>
</reference>
<reference key="3">
    <citation type="journal article" date="2009" name="PLoS Biol.">
        <title>Lineage-specific biology revealed by a finished genome assembly of the mouse.</title>
        <authorList>
            <person name="Church D.M."/>
            <person name="Goodstadt L."/>
            <person name="Hillier L.W."/>
            <person name="Zody M.C."/>
            <person name="Goldstein S."/>
            <person name="She X."/>
            <person name="Bult C.J."/>
            <person name="Agarwala R."/>
            <person name="Cherry J.L."/>
            <person name="DiCuccio M."/>
            <person name="Hlavina W."/>
            <person name="Kapustin Y."/>
            <person name="Meric P."/>
            <person name="Maglott D."/>
            <person name="Birtle Z."/>
            <person name="Marques A.C."/>
            <person name="Graves T."/>
            <person name="Zhou S."/>
            <person name="Teague B."/>
            <person name="Potamousis K."/>
            <person name="Churas C."/>
            <person name="Place M."/>
            <person name="Herschleb J."/>
            <person name="Runnheim R."/>
            <person name="Forrest D."/>
            <person name="Amos-Landgraf J."/>
            <person name="Schwartz D.C."/>
            <person name="Cheng Z."/>
            <person name="Lindblad-Toh K."/>
            <person name="Eichler E.E."/>
            <person name="Ponting C.P."/>
        </authorList>
    </citation>
    <scope>NUCLEOTIDE SEQUENCE [LARGE SCALE GENOMIC DNA]</scope>
    <source>
        <strain>C57BL/6J</strain>
    </source>
</reference>
<reference key="4">
    <citation type="submission" date="2009-01" db="UniProtKB">
        <authorList>
            <person name="Lubec G."/>
            <person name="Sunyer B."/>
            <person name="Chen W.-Q."/>
        </authorList>
    </citation>
    <scope>PROTEIN SEQUENCE OF 136-147</scope>
    <scope>IDENTIFICATION BY MASS SPECTROMETRY</scope>
    <source>
        <strain>OF1</strain>
        <tissue>Hippocampus</tissue>
    </source>
</reference>
<reference key="5">
    <citation type="journal article" date="2006" name="Mol. Cell. Proteomics">
        <title>Comprehensive identification of phosphorylation sites in postsynaptic density preparations.</title>
        <authorList>
            <person name="Trinidad J.C."/>
            <person name="Specht C.G."/>
            <person name="Thalhammer A."/>
            <person name="Schoepfer R."/>
            <person name="Burlingame A.L."/>
        </authorList>
    </citation>
    <scope>PHOSPHORYLATION [LARGE SCALE ANALYSIS] AT THR-287</scope>
    <scope>IDENTIFICATION BY MASS SPECTROMETRY [LARGE SCALE ANALYSIS]</scope>
    <source>
        <tissue>Brain</tissue>
    </source>
</reference>
<reference key="6">
    <citation type="journal article" date="2007" name="Mol. Cell. Proteomics">
        <title>Qualitative and quantitative analyses of protein phosphorylation in naive and stimulated mouse synaptosomal preparations.</title>
        <authorList>
            <person name="Munton R.P."/>
            <person name="Tweedie-Cullen R."/>
            <person name="Livingstone-Zatchej M."/>
            <person name="Weinandy F."/>
            <person name="Waidelich M."/>
            <person name="Longo D."/>
            <person name="Gehrig P."/>
            <person name="Potthast F."/>
            <person name="Rutishauser D."/>
            <person name="Gerrits B."/>
            <person name="Panse C."/>
            <person name="Schlapbach R."/>
            <person name="Mansuy I.M."/>
        </authorList>
    </citation>
    <scope>IDENTIFICATION BY MASS SPECTROMETRY [LARGE SCALE ANALYSIS]</scope>
    <source>
        <tissue>Brain cortex</tissue>
    </source>
</reference>
<reference key="7">
    <citation type="journal article" date="2008" name="J. Proteome Res.">
        <title>Large-scale identification and evolution indexing of tyrosine phosphorylation sites from murine brain.</title>
        <authorList>
            <person name="Ballif B.A."/>
            <person name="Carey G.R."/>
            <person name="Sunyaev S.R."/>
            <person name="Gygi S.P."/>
        </authorList>
    </citation>
    <scope>PHOSPHORYLATION [LARGE SCALE ANALYSIS] AT TYR-17</scope>
    <scope>IDENTIFICATION BY MASS SPECTROMETRY [LARGE SCALE ANALYSIS]</scope>
    <source>
        <tissue>Brain</tissue>
    </source>
</reference>
<reference key="8">
    <citation type="journal article" date="2010" name="Cell">
        <title>A tissue-specific atlas of mouse protein phosphorylation and expression.</title>
        <authorList>
            <person name="Huttlin E.L."/>
            <person name="Jedrychowski M.P."/>
            <person name="Elias J.E."/>
            <person name="Goswami T."/>
            <person name="Rad R."/>
            <person name="Beausoleil S.A."/>
            <person name="Villen J."/>
            <person name="Haas W."/>
            <person name="Sowa M.E."/>
            <person name="Gygi S.P."/>
        </authorList>
    </citation>
    <scope>PHOSPHORYLATION [LARGE SCALE ANALYSIS] AT SER-371; SER-394; THR-400 AND THR-401</scope>
    <scope>IDENTIFICATION BY MASS SPECTROMETRY [LARGE SCALE ANALYSIS]</scope>
    <source>
        <tissue>Brain</tissue>
    </source>
</reference>
<reference key="9">
    <citation type="journal article" date="2011" name="J. Neurosci.">
        <title>{beta}CaMKII plays a nonenzymatic role in hippocampal synaptic plasticity and learning by targeting {alpha}CaMKII to synapses.</title>
        <authorList>
            <person name="Borgesius N.Z."/>
            <person name="van Woerden G.M."/>
            <person name="Buitendijk G.H."/>
            <person name="Keijzer N."/>
            <person name="Jaarsma D."/>
            <person name="Hoogenraad C.C."/>
            <person name="Elgersma Y."/>
        </authorList>
    </citation>
    <scope>FUNCTION</scope>
    <scope>DISRUPTION PHENOTYPE</scope>
    <scope>MUTAGENESIS OF ALA-303</scope>
</reference>
<reference key="10">
    <citation type="journal article" date="2013" name="Elife">
        <title>CAMKII and Calcineurin regulate the lifespan of Caenorhabditis elegans through the FOXO transcription factor DAF-16.</title>
        <authorList>
            <person name="Tao L."/>
            <person name="Xie Q."/>
            <person name="Ding Y.H."/>
            <person name="Li S.T."/>
            <person name="Peng S."/>
            <person name="Zhang Y.P."/>
            <person name="Tan D."/>
            <person name="Yuan Z."/>
            <person name="Dong M.Q."/>
        </authorList>
    </citation>
    <scope>INTERACTION WITH FOXO3</scope>
</reference>
<reference key="11">
    <citation type="journal article" date="2017" name="Am. J. Hum. Genet.">
        <title>De Novo Mutations in Protein Kinase Genes CAMK2A and CAMK2B Cause Intellectual Disability.</title>
        <authorList>
            <consortium name="Undiagnosed Diseases Network"/>
            <consortium name="GEM HUGO"/>
            <consortium name="Deciphering Developmental Disorders Study"/>
            <person name="Kuery S."/>
            <person name="van Woerden G.M."/>
            <person name="Besnard T."/>
            <person name="Proietti Onori M."/>
            <person name="Latypova X."/>
            <person name="Towne M.C."/>
            <person name="Cho M.T."/>
            <person name="Prescott T.E."/>
            <person name="Ploeg M.A."/>
            <person name="Sanders S."/>
            <person name="Stessman H.A.F."/>
            <person name="Pujol A."/>
            <person name="Distel B."/>
            <person name="Robak L.A."/>
            <person name="Bernstein J.A."/>
            <person name="Denomme-Pichon A.S."/>
            <person name="Lesca G."/>
            <person name="Sellars E.A."/>
            <person name="Berg J."/>
            <person name="Carre W."/>
            <person name="Busk O.L."/>
            <person name="van Bon B.W.M."/>
            <person name="Waugh J.L."/>
            <person name="Deardorff M."/>
            <person name="Hoganson G.E."/>
            <person name="Bosanko K.B."/>
            <person name="Johnson D.S."/>
            <person name="Dabir T."/>
            <person name="Holla O.L."/>
            <person name="Sarkar A."/>
            <person name="Tveten K."/>
            <person name="de Bellescize J."/>
            <person name="Braathen G.J."/>
            <person name="Terhal P.A."/>
            <person name="Grange D.K."/>
            <person name="van Haeringen A."/>
            <person name="Lam C."/>
            <person name="Mirzaa G."/>
            <person name="Burton J."/>
            <person name="Bhoj E.J."/>
            <person name="Douglas J."/>
            <person name="Santani A.B."/>
            <person name="Nesbitt A.I."/>
            <person name="Helbig K.L."/>
            <person name="Andrews M.V."/>
            <person name="Begtrup A."/>
            <person name="Tang S."/>
            <person name="van Gassen K.L.I."/>
            <person name="Juusola J."/>
            <person name="Foss K."/>
            <person name="Enns G.M."/>
            <person name="Moog U."/>
            <person name="Hinderhofer K."/>
            <person name="Paramasivam N."/>
            <person name="Lincoln S."/>
            <person name="Kusako B.H."/>
            <person name="Lindenbaum P."/>
            <person name="Charpentier E."/>
            <person name="Nowak C.B."/>
            <person name="Cherot E."/>
            <person name="Simonet T."/>
            <person name="Ruivenkamp C.A.L."/>
            <person name="Hahn S."/>
            <person name="Brownstein C.A."/>
            <person name="Xia F."/>
            <person name="Schmitt S."/>
            <person name="Deb W."/>
            <person name="Bonneau D."/>
            <person name="Nizon M."/>
            <person name="Quinquis D."/>
            <person name="Chelly J."/>
            <person name="Rudolf G."/>
            <person name="Sanlaville D."/>
            <person name="Parent P."/>
            <person name="Gilbert-Dussardier B."/>
            <person name="Toutain A."/>
            <person name="Sutton V.R."/>
            <person name="Thies J."/>
            <person name="Peart-Vissers L.E.L.M."/>
            <person name="Boisseau P."/>
            <person name="Vincent M."/>
            <person name="Grabrucker A.M."/>
            <person name="Dubourg C."/>
            <person name="Tan W.H."/>
            <person name="Verbeek N.E."/>
            <person name="Granzow M."/>
            <person name="Santen G.W.E."/>
            <person name="Shendure J."/>
            <person name="Isidor B."/>
            <person name="Pasquier L."/>
            <person name="Redon R."/>
            <person name="Yang Y."/>
            <person name="State M.W."/>
            <person name="Kleefstra T."/>
            <person name="Cogne B."/>
            <person name="Petrovski S."/>
            <person name="Retterer K."/>
            <person name="Eichler E.E."/>
            <person name="Rosenfeld J.A."/>
            <person name="Agrawal P.B."/>
            <person name="Bezieau S."/>
            <person name="Odent S."/>
            <person name="Elgersma Y."/>
            <person name="Mercier S."/>
        </authorList>
    </citation>
    <scope>FUNCTION</scope>
</reference>
<gene>
    <name type="primary">Camk2b</name>
    <name type="synonym">Camk2d</name>
</gene>
<proteinExistence type="evidence at protein level"/>
<name>KCC2B_MOUSE</name>